<dbReference type="EC" id="5.2.1.8" evidence="1"/>
<dbReference type="EMBL" id="AE006470">
    <property type="protein sequence ID" value="AAM73153.1"/>
    <property type="molecule type" value="Genomic_DNA"/>
</dbReference>
<dbReference type="RefSeq" id="NP_662811.1">
    <property type="nucleotide sequence ID" value="NC_002932.3"/>
</dbReference>
<dbReference type="RefSeq" id="WP_010933591.1">
    <property type="nucleotide sequence ID" value="NC_002932.3"/>
</dbReference>
<dbReference type="SMR" id="Q8KB57"/>
<dbReference type="STRING" id="194439.CT1934"/>
<dbReference type="EnsemblBacteria" id="AAM73153">
    <property type="protein sequence ID" value="AAM73153"/>
    <property type="gene ID" value="CT1934"/>
</dbReference>
<dbReference type="KEGG" id="cte:CT1934"/>
<dbReference type="PATRIC" id="fig|194439.7.peg.1752"/>
<dbReference type="eggNOG" id="COG0544">
    <property type="taxonomic scope" value="Bacteria"/>
</dbReference>
<dbReference type="HOGENOM" id="CLU_033058_3_1_10"/>
<dbReference type="OrthoDB" id="9767721at2"/>
<dbReference type="Proteomes" id="UP000001007">
    <property type="component" value="Chromosome"/>
</dbReference>
<dbReference type="GO" id="GO:0005737">
    <property type="term" value="C:cytoplasm"/>
    <property type="evidence" value="ECO:0007669"/>
    <property type="project" value="UniProtKB-SubCell"/>
</dbReference>
<dbReference type="GO" id="GO:0003755">
    <property type="term" value="F:peptidyl-prolyl cis-trans isomerase activity"/>
    <property type="evidence" value="ECO:0007669"/>
    <property type="project" value="UniProtKB-UniRule"/>
</dbReference>
<dbReference type="GO" id="GO:0044183">
    <property type="term" value="F:protein folding chaperone"/>
    <property type="evidence" value="ECO:0007669"/>
    <property type="project" value="TreeGrafter"/>
</dbReference>
<dbReference type="GO" id="GO:0043022">
    <property type="term" value="F:ribosome binding"/>
    <property type="evidence" value="ECO:0007669"/>
    <property type="project" value="TreeGrafter"/>
</dbReference>
<dbReference type="GO" id="GO:0051083">
    <property type="term" value="P:'de novo' cotranslational protein folding"/>
    <property type="evidence" value="ECO:0007669"/>
    <property type="project" value="TreeGrafter"/>
</dbReference>
<dbReference type="GO" id="GO:0051301">
    <property type="term" value="P:cell division"/>
    <property type="evidence" value="ECO:0007669"/>
    <property type="project" value="UniProtKB-KW"/>
</dbReference>
<dbReference type="GO" id="GO:0061077">
    <property type="term" value="P:chaperone-mediated protein folding"/>
    <property type="evidence" value="ECO:0007669"/>
    <property type="project" value="TreeGrafter"/>
</dbReference>
<dbReference type="GO" id="GO:0015031">
    <property type="term" value="P:protein transport"/>
    <property type="evidence" value="ECO:0007669"/>
    <property type="project" value="UniProtKB-UniRule"/>
</dbReference>
<dbReference type="GO" id="GO:0043335">
    <property type="term" value="P:protein unfolding"/>
    <property type="evidence" value="ECO:0007669"/>
    <property type="project" value="TreeGrafter"/>
</dbReference>
<dbReference type="Gene3D" id="3.10.50.40">
    <property type="match status" value="1"/>
</dbReference>
<dbReference type="Gene3D" id="3.30.70.1050">
    <property type="entry name" value="Trigger factor ribosome-binding domain"/>
    <property type="match status" value="1"/>
</dbReference>
<dbReference type="Gene3D" id="1.10.3120.10">
    <property type="entry name" value="Trigger factor, C-terminal domain"/>
    <property type="match status" value="1"/>
</dbReference>
<dbReference type="HAMAP" id="MF_00303">
    <property type="entry name" value="Trigger_factor_Tig"/>
    <property type="match status" value="1"/>
</dbReference>
<dbReference type="InterPro" id="IPR046357">
    <property type="entry name" value="PPIase_dom_sf"/>
</dbReference>
<dbReference type="InterPro" id="IPR005215">
    <property type="entry name" value="Trig_fac"/>
</dbReference>
<dbReference type="InterPro" id="IPR008880">
    <property type="entry name" value="Trigger_fac_C"/>
</dbReference>
<dbReference type="InterPro" id="IPR037041">
    <property type="entry name" value="Trigger_fac_C_sf"/>
</dbReference>
<dbReference type="InterPro" id="IPR008881">
    <property type="entry name" value="Trigger_fac_ribosome-bd_bac"/>
</dbReference>
<dbReference type="InterPro" id="IPR036611">
    <property type="entry name" value="Trigger_fac_ribosome-bd_sf"/>
</dbReference>
<dbReference type="InterPro" id="IPR027304">
    <property type="entry name" value="Trigger_fact/SurA_dom_sf"/>
</dbReference>
<dbReference type="NCBIfam" id="TIGR00115">
    <property type="entry name" value="tig"/>
    <property type="match status" value="1"/>
</dbReference>
<dbReference type="PANTHER" id="PTHR30560">
    <property type="entry name" value="TRIGGER FACTOR CHAPERONE AND PEPTIDYL-PROLYL CIS/TRANS ISOMERASE"/>
    <property type="match status" value="1"/>
</dbReference>
<dbReference type="PANTHER" id="PTHR30560:SF3">
    <property type="entry name" value="TRIGGER FACTOR-LIKE PROTEIN TIG, CHLOROPLASTIC"/>
    <property type="match status" value="1"/>
</dbReference>
<dbReference type="Pfam" id="PF05698">
    <property type="entry name" value="Trigger_C"/>
    <property type="match status" value="1"/>
</dbReference>
<dbReference type="Pfam" id="PF05697">
    <property type="entry name" value="Trigger_N"/>
    <property type="match status" value="1"/>
</dbReference>
<dbReference type="PIRSF" id="PIRSF003095">
    <property type="entry name" value="Trigger_factor"/>
    <property type="match status" value="1"/>
</dbReference>
<dbReference type="SUPFAM" id="SSF54534">
    <property type="entry name" value="FKBP-like"/>
    <property type="match status" value="1"/>
</dbReference>
<dbReference type="SUPFAM" id="SSF109998">
    <property type="entry name" value="Triger factor/SurA peptide-binding domain-like"/>
    <property type="match status" value="1"/>
</dbReference>
<dbReference type="SUPFAM" id="SSF102735">
    <property type="entry name" value="Trigger factor ribosome-binding domain"/>
    <property type="match status" value="1"/>
</dbReference>
<sequence length="426" mass="48609">MQKNITNVSEIAQELEIILTAEEYQPEYDQQLEEARKSVRIKGFRQGHVPVGMLKRIIGPSIEAEVAEKMASKYFAAIAEEEKINPASRAQIESYNYEDGKLTIKISYEIHPEFELKDFSEYTFTQAEYTISDEDVDREIKLILRGHGTMVTSEDAAAEGDTVIGDVTKLDADGADIEGSKNENHHFNLEYLPADNPFRMALEGKKAGDVVDVTVKPKEEGGETNRFRIEIKEVKHLELPELDDELVKEISQQRFEKVEDFRNDIRLQLQAHFSDKSEYDLLEAISSKLIEEHPVPTPSAMVAHFQNILLENAKRQVGGQFPKGFDEREFFNAMKPNAEKHARWLLISQKIAKENNLEVTDEDIKAFAEKEAEKEPSLTVDQLLNTYLSTEFKDYIIDTILKEKIYDVIKSKVTITKEATPVPAHN</sequence>
<reference key="1">
    <citation type="journal article" date="2002" name="Proc. Natl. Acad. Sci. U.S.A.">
        <title>The complete genome sequence of Chlorobium tepidum TLS, a photosynthetic, anaerobic, green-sulfur bacterium.</title>
        <authorList>
            <person name="Eisen J.A."/>
            <person name="Nelson K.E."/>
            <person name="Paulsen I.T."/>
            <person name="Heidelberg J.F."/>
            <person name="Wu M."/>
            <person name="Dodson R.J."/>
            <person name="DeBoy R.T."/>
            <person name="Gwinn M.L."/>
            <person name="Nelson W.C."/>
            <person name="Haft D.H."/>
            <person name="Hickey E.K."/>
            <person name="Peterson J.D."/>
            <person name="Durkin A.S."/>
            <person name="Kolonay J.F."/>
            <person name="Yang F."/>
            <person name="Holt I.E."/>
            <person name="Umayam L.A."/>
            <person name="Mason T.M."/>
            <person name="Brenner M."/>
            <person name="Shea T.P."/>
            <person name="Parksey D.S."/>
            <person name="Nierman W.C."/>
            <person name="Feldblyum T.V."/>
            <person name="Hansen C.L."/>
            <person name="Craven M.B."/>
            <person name="Radune D."/>
            <person name="Vamathevan J.J."/>
            <person name="Khouri H.M."/>
            <person name="White O."/>
            <person name="Gruber T.M."/>
            <person name="Ketchum K.A."/>
            <person name="Venter J.C."/>
            <person name="Tettelin H."/>
            <person name="Bryant D.A."/>
            <person name="Fraser C.M."/>
        </authorList>
    </citation>
    <scope>NUCLEOTIDE SEQUENCE [LARGE SCALE GENOMIC DNA]</scope>
    <source>
        <strain>ATCC 49652 / DSM 12025 / NBRC 103806 / TLS</strain>
    </source>
</reference>
<proteinExistence type="inferred from homology"/>
<protein>
    <recommendedName>
        <fullName evidence="1">Trigger factor</fullName>
        <shortName evidence="1">TF</shortName>
        <ecNumber evidence="1">5.2.1.8</ecNumber>
    </recommendedName>
    <alternativeName>
        <fullName evidence="1">PPIase</fullName>
    </alternativeName>
</protein>
<comment type="function">
    <text evidence="1">Involved in protein export. Acts as a chaperone by maintaining the newly synthesized protein in an open conformation. Functions as a peptidyl-prolyl cis-trans isomerase.</text>
</comment>
<comment type="catalytic activity">
    <reaction evidence="1">
        <text>[protein]-peptidylproline (omega=180) = [protein]-peptidylproline (omega=0)</text>
        <dbReference type="Rhea" id="RHEA:16237"/>
        <dbReference type="Rhea" id="RHEA-COMP:10747"/>
        <dbReference type="Rhea" id="RHEA-COMP:10748"/>
        <dbReference type="ChEBI" id="CHEBI:83833"/>
        <dbReference type="ChEBI" id="CHEBI:83834"/>
        <dbReference type="EC" id="5.2.1.8"/>
    </reaction>
</comment>
<comment type="subcellular location">
    <subcellularLocation>
        <location>Cytoplasm</location>
    </subcellularLocation>
    <text evidence="1">About half TF is bound to the ribosome near the polypeptide exit tunnel while the other half is free in the cytoplasm.</text>
</comment>
<comment type="domain">
    <text evidence="1">Consists of 3 domains; the N-terminus binds the ribosome, the middle domain has PPIase activity, while the C-terminus has intrinsic chaperone activity on its own.</text>
</comment>
<comment type="similarity">
    <text evidence="1">Belongs to the FKBP-type PPIase family. Tig subfamily.</text>
</comment>
<name>TIG_CHLTE</name>
<gene>
    <name evidence="1" type="primary">tig</name>
    <name type="ordered locus">CT1934</name>
</gene>
<accession>Q8KB57</accession>
<feature type="chain" id="PRO_0000179334" description="Trigger factor">
    <location>
        <begin position="1"/>
        <end position="426"/>
    </location>
</feature>
<feature type="domain" description="PPIase FKBP-type" evidence="1">
    <location>
        <begin position="160"/>
        <end position="240"/>
    </location>
</feature>
<keyword id="KW-0131">Cell cycle</keyword>
<keyword id="KW-0132">Cell division</keyword>
<keyword id="KW-0143">Chaperone</keyword>
<keyword id="KW-0963">Cytoplasm</keyword>
<keyword id="KW-0413">Isomerase</keyword>
<keyword id="KW-1185">Reference proteome</keyword>
<keyword id="KW-0697">Rotamase</keyword>
<evidence type="ECO:0000255" key="1">
    <source>
        <dbReference type="HAMAP-Rule" id="MF_00303"/>
    </source>
</evidence>
<organism>
    <name type="scientific">Chlorobaculum tepidum (strain ATCC 49652 / DSM 12025 / NBRC 103806 / TLS)</name>
    <name type="common">Chlorobium tepidum</name>
    <dbReference type="NCBI Taxonomy" id="194439"/>
    <lineage>
        <taxon>Bacteria</taxon>
        <taxon>Pseudomonadati</taxon>
        <taxon>Chlorobiota</taxon>
        <taxon>Chlorobiia</taxon>
        <taxon>Chlorobiales</taxon>
        <taxon>Chlorobiaceae</taxon>
        <taxon>Chlorobaculum</taxon>
    </lineage>
</organism>